<organism>
    <name type="scientific">Escherichia coli (strain K12)</name>
    <dbReference type="NCBI Taxonomy" id="83333"/>
    <lineage>
        <taxon>Bacteria</taxon>
        <taxon>Pseudomonadati</taxon>
        <taxon>Pseudomonadota</taxon>
        <taxon>Gammaproteobacteria</taxon>
        <taxon>Enterobacterales</taxon>
        <taxon>Enterobacteriaceae</taxon>
        <taxon>Escherichia</taxon>
    </lineage>
</organism>
<accession>Q46843</accession>
<accession>Q2M9L0</accession>
<dbReference type="EMBL" id="U28377">
    <property type="protein sequence ID" value="AAA69152.1"/>
    <property type="molecule type" value="Genomic_DNA"/>
</dbReference>
<dbReference type="EMBL" id="U00096">
    <property type="protein sequence ID" value="AAC76021.1"/>
    <property type="molecule type" value="Genomic_DNA"/>
</dbReference>
<dbReference type="EMBL" id="AP009048">
    <property type="protein sequence ID" value="BAE77046.1"/>
    <property type="molecule type" value="Genomic_DNA"/>
</dbReference>
<dbReference type="PIR" id="G65084">
    <property type="entry name" value="G65084"/>
</dbReference>
<dbReference type="RefSeq" id="NP_417459.1">
    <property type="nucleotide sequence ID" value="NC_000913.3"/>
</dbReference>
<dbReference type="RefSeq" id="WP_001076243.1">
    <property type="nucleotide sequence ID" value="NZ_STEB01000001.1"/>
</dbReference>
<dbReference type="SMR" id="Q46843"/>
<dbReference type="BioGRID" id="4261183">
    <property type="interactions" value="17"/>
</dbReference>
<dbReference type="FunCoup" id="Q46843">
    <property type="interactions" value="64"/>
</dbReference>
<dbReference type="STRING" id="511145.b2985"/>
<dbReference type="TCDB" id="9.B.331.1.2">
    <property type="family name" value="the atp binding protein (atp-bp) family"/>
</dbReference>
<dbReference type="PaxDb" id="511145-b2985"/>
<dbReference type="EnsemblBacteria" id="AAC76021">
    <property type="protein sequence ID" value="AAC76021"/>
    <property type="gene ID" value="b2985"/>
</dbReference>
<dbReference type="GeneID" id="947476"/>
<dbReference type="KEGG" id="ecj:JW5491"/>
<dbReference type="KEGG" id="eco:b2985"/>
<dbReference type="PATRIC" id="fig|511145.12.peg.3080"/>
<dbReference type="EchoBASE" id="EB2825"/>
<dbReference type="eggNOG" id="COG0125">
    <property type="taxonomic scope" value="Bacteria"/>
</dbReference>
<dbReference type="HOGENOM" id="CLU_102178_0_0_6"/>
<dbReference type="InParanoid" id="Q46843"/>
<dbReference type="OMA" id="QWMASYP"/>
<dbReference type="OrthoDB" id="6853346at2"/>
<dbReference type="PhylomeDB" id="Q46843"/>
<dbReference type="BioCyc" id="EcoCyc:G7551-MONOMER"/>
<dbReference type="PRO" id="PR:Q46843"/>
<dbReference type="Proteomes" id="UP000000625">
    <property type="component" value="Chromosome"/>
</dbReference>
<dbReference type="GO" id="GO:0005524">
    <property type="term" value="F:ATP binding"/>
    <property type="evidence" value="ECO:0007669"/>
    <property type="project" value="UniProtKB-KW"/>
</dbReference>
<dbReference type="CDD" id="cd01672">
    <property type="entry name" value="TMPK"/>
    <property type="match status" value="1"/>
</dbReference>
<dbReference type="Gene3D" id="3.40.50.300">
    <property type="entry name" value="P-loop containing nucleotide triphosphate hydrolases"/>
    <property type="match status" value="1"/>
</dbReference>
<dbReference type="InterPro" id="IPR027417">
    <property type="entry name" value="P-loop_NTPase"/>
</dbReference>
<dbReference type="SUPFAM" id="SSF52540">
    <property type="entry name" value="P-loop containing nucleoside triphosphate hydrolases"/>
    <property type="match status" value="1"/>
</dbReference>
<name>YGHS_ECOLI</name>
<sequence length="237" mass="26347">MNQRNMSIINSTPVRVIAIVGCDGSGKSTLTASLVNELAARMPTEHIYLGQSSGRIGEWISQLPVIGAPFGRYLRSKAAHVHEKPSTPPGNITALVIYLLSCWRAYKFRKMLCKSQQGFLLITDRYPQVEVPGFRFDGPQLAKTTGGNGWIKMLRQRELKLYQWMASYLPVLLIRLGIDEQTAFARKPDHQLAALQEKIAVTPQLTFNGAKILELDGRHPADEILQASLRAIHAALS</sequence>
<gene>
    <name type="primary">yghS</name>
    <name type="ordered locus">b2985</name>
    <name type="ordered locus">JW5491</name>
</gene>
<feature type="chain" id="PRO_0000169392" description="Uncharacterized ATP-binding protein YghS">
    <location>
        <begin position="1"/>
        <end position="237"/>
    </location>
</feature>
<feature type="binding site" evidence="1">
    <location>
        <begin position="21"/>
        <end position="28"/>
    </location>
    <ligand>
        <name>ATP</name>
        <dbReference type="ChEBI" id="CHEBI:30616"/>
    </ligand>
</feature>
<proteinExistence type="predicted"/>
<comment type="similarity">
    <text evidence="2">To E.coli YghR and YghT.</text>
</comment>
<reference key="1">
    <citation type="journal article" date="1997" name="Science">
        <title>The complete genome sequence of Escherichia coli K-12.</title>
        <authorList>
            <person name="Blattner F.R."/>
            <person name="Plunkett G. III"/>
            <person name="Bloch C.A."/>
            <person name="Perna N.T."/>
            <person name="Burland V."/>
            <person name="Riley M."/>
            <person name="Collado-Vides J."/>
            <person name="Glasner J.D."/>
            <person name="Rode C.K."/>
            <person name="Mayhew G.F."/>
            <person name="Gregor J."/>
            <person name="Davis N.W."/>
            <person name="Kirkpatrick H.A."/>
            <person name="Goeden M.A."/>
            <person name="Rose D.J."/>
            <person name="Mau B."/>
            <person name="Shao Y."/>
        </authorList>
    </citation>
    <scope>NUCLEOTIDE SEQUENCE [LARGE SCALE GENOMIC DNA]</scope>
    <source>
        <strain>K12 / MG1655 / ATCC 47076</strain>
    </source>
</reference>
<reference key="2">
    <citation type="journal article" date="2006" name="Mol. Syst. Biol.">
        <title>Highly accurate genome sequences of Escherichia coli K-12 strains MG1655 and W3110.</title>
        <authorList>
            <person name="Hayashi K."/>
            <person name="Morooka N."/>
            <person name="Yamamoto Y."/>
            <person name="Fujita K."/>
            <person name="Isono K."/>
            <person name="Choi S."/>
            <person name="Ohtsubo E."/>
            <person name="Baba T."/>
            <person name="Wanner B.L."/>
            <person name="Mori H."/>
            <person name="Horiuchi T."/>
        </authorList>
    </citation>
    <scope>NUCLEOTIDE SEQUENCE [LARGE SCALE GENOMIC DNA]</scope>
    <source>
        <strain>K12 / W3110 / ATCC 27325 / DSM 5911</strain>
    </source>
</reference>
<keyword id="KW-0067">ATP-binding</keyword>
<keyword id="KW-0547">Nucleotide-binding</keyword>
<keyword id="KW-1185">Reference proteome</keyword>
<evidence type="ECO:0000255" key="1"/>
<evidence type="ECO:0000305" key="2"/>
<protein>
    <recommendedName>
        <fullName>Uncharacterized ATP-binding protein YghS</fullName>
    </recommendedName>
</protein>